<accession>Q9K5M8</accession>
<protein>
    <recommendedName>
        <fullName evidence="1">Ribosomal RNA small subunit methyltransferase G</fullName>
        <ecNumber evidence="1">2.1.1.-</ecNumber>
    </recommendedName>
    <alternativeName>
        <fullName evidence="1">16S rRNA 7-methylguanosine methyltransferase</fullName>
        <shortName evidence="1">16S rRNA m7G methyltransferase</shortName>
    </alternativeName>
</protein>
<sequence length="238" mass="26881">MEITEFRQRLEERGFSLSQAQLDQFEHYYHTLVEWNEKMNLTAITDKEGVYLKHFYDSLTAAFYVDFTKVATVVDVGAGAGFPSIPLKIVFPELRVTIVDSLKKRIGFLEHLSETLGLKGTAFYHDRAETFAQKKEHREQYDLVLARAVARLPVLSELCLPLAKVEGTFVAMKGAGANEELTAAQGALKKLGGSVIQNEQFTLPIEESERHVIIIRKERSTPKKYPRKPGTPNKQPLS</sequence>
<organism>
    <name type="scientific">Halalkalibacterium halodurans (strain ATCC BAA-125 / DSM 18197 / FERM 7344 / JCM 9153 / C-125)</name>
    <name type="common">Bacillus halodurans</name>
    <dbReference type="NCBI Taxonomy" id="272558"/>
    <lineage>
        <taxon>Bacteria</taxon>
        <taxon>Bacillati</taxon>
        <taxon>Bacillota</taxon>
        <taxon>Bacilli</taxon>
        <taxon>Bacillales</taxon>
        <taxon>Bacillaceae</taxon>
        <taxon>Halalkalibacterium (ex Joshi et al. 2022)</taxon>
    </lineage>
</organism>
<gene>
    <name evidence="1" type="primary">rsmG</name>
    <name type="ordered locus">BH4060</name>
</gene>
<reference key="1">
    <citation type="journal article" date="2000" name="Nucleic Acids Res.">
        <title>Complete genome sequence of the alkaliphilic bacterium Bacillus halodurans and genomic sequence comparison with Bacillus subtilis.</title>
        <authorList>
            <person name="Takami H."/>
            <person name="Nakasone K."/>
            <person name="Takaki Y."/>
            <person name="Maeno G."/>
            <person name="Sasaki R."/>
            <person name="Masui N."/>
            <person name="Fuji F."/>
            <person name="Hirama C."/>
            <person name="Nakamura Y."/>
            <person name="Ogasawara N."/>
            <person name="Kuhara S."/>
            <person name="Horikoshi K."/>
        </authorList>
    </citation>
    <scope>NUCLEOTIDE SEQUENCE [LARGE SCALE GENOMIC DNA]</scope>
    <source>
        <strain>ATCC BAA-125 / DSM 18197 / FERM 7344 / JCM 9153 / C-125</strain>
    </source>
</reference>
<evidence type="ECO:0000255" key="1">
    <source>
        <dbReference type="HAMAP-Rule" id="MF_00074"/>
    </source>
</evidence>
<evidence type="ECO:0000256" key="2">
    <source>
        <dbReference type="SAM" id="MobiDB-lite"/>
    </source>
</evidence>
<keyword id="KW-0963">Cytoplasm</keyword>
<keyword id="KW-0489">Methyltransferase</keyword>
<keyword id="KW-1185">Reference proteome</keyword>
<keyword id="KW-0698">rRNA processing</keyword>
<keyword id="KW-0949">S-adenosyl-L-methionine</keyword>
<keyword id="KW-0808">Transferase</keyword>
<name>RSMG_HALH5</name>
<proteinExistence type="inferred from homology"/>
<comment type="function">
    <text evidence="1">Specifically methylates the N7 position of guanine in position 535 of 16S rRNA.</text>
</comment>
<comment type="subcellular location">
    <subcellularLocation>
        <location evidence="1">Cytoplasm</location>
    </subcellularLocation>
</comment>
<comment type="similarity">
    <text evidence="1">Belongs to the methyltransferase superfamily. RNA methyltransferase RsmG family.</text>
</comment>
<feature type="chain" id="PRO_0000184213" description="Ribosomal RNA small subunit methyltransferase G">
    <location>
        <begin position="1"/>
        <end position="238"/>
    </location>
</feature>
<feature type="region of interest" description="Disordered" evidence="2">
    <location>
        <begin position="216"/>
        <end position="238"/>
    </location>
</feature>
<feature type="binding site" evidence="1">
    <location>
        <position position="77"/>
    </location>
    <ligand>
        <name>S-adenosyl-L-methionine</name>
        <dbReference type="ChEBI" id="CHEBI:59789"/>
    </ligand>
</feature>
<feature type="binding site" evidence="1">
    <location>
        <position position="82"/>
    </location>
    <ligand>
        <name>S-adenosyl-L-methionine</name>
        <dbReference type="ChEBI" id="CHEBI:59789"/>
    </ligand>
</feature>
<feature type="binding site" evidence="1">
    <location>
        <begin position="128"/>
        <end position="129"/>
    </location>
    <ligand>
        <name>S-adenosyl-L-methionine</name>
        <dbReference type="ChEBI" id="CHEBI:59789"/>
    </ligand>
</feature>
<feature type="binding site" evidence="1">
    <location>
        <position position="147"/>
    </location>
    <ligand>
        <name>S-adenosyl-L-methionine</name>
        <dbReference type="ChEBI" id="CHEBI:59789"/>
    </ligand>
</feature>
<dbReference type="EC" id="2.1.1.-" evidence="1"/>
<dbReference type="EMBL" id="BA000004">
    <property type="protein sequence ID" value="BAB07779.1"/>
    <property type="molecule type" value="Genomic_DNA"/>
</dbReference>
<dbReference type="PIR" id="D84157">
    <property type="entry name" value="D84157"/>
</dbReference>
<dbReference type="RefSeq" id="WP_010900184.1">
    <property type="nucleotide sequence ID" value="NC_002570.2"/>
</dbReference>
<dbReference type="SMR" id="Q9K5M8"/>
<dbReference type="STRING" id="272558.gene:10729978"/>
<dbReference type="GeneID" id="87599643"/>
<dbReference type="KEGG" id="bha:BH4060"/>
<dbReference type="eggNOG" id="COG0357">
    <property type="taxonomic scope" value="Bacteria"/>
</dbReference>
<dbReference type="HOGENOM" id="CLU_065341_0_2_9"/>
<dbReference type="OrthoDB" id="9808773at2"/>
<dbReference type="Proteomes" id="UP000001258">
    <property type="component" value="Chromosome"/>
</dbReference>
<dbReference type="GO" id="GO:0005829">
    <property type="term" value="C:cytosol"/>
    <property type="evidence" value="ECO:0007669"/>
    <property type="project" value="TreeGrafter"/>
</dbReference>
<dbReference type="GO" id="GO:0070043">
    <property type="term" value="F:rRNA (guanine-N7-)-methyltransferase activity"/>
    <property type="evidence" value="ECO:0007669"/>
    <property type="project" value="UniProtKB-UniRule"/>
</dbReference>
<dbReference type="CDD" id="cd02440">
    <property type="entry name" value="AdoMet_MTases"/>
    <property type="match status" value="1"/>
</dbReference>
<dbReference type="FunFam" id="3.40.50.150:FF:000041">
    <property type="entry name" value="Ribosomal RNA small subunit methyltransferase G"/>
    <property type="match status" value="1"/>
</dbReference>
<dbReference type="Gene3D" id="3.40.50.150">
    <property type="entry name" value="Vaccinia Virus protein VP39"/>
    <property type="match status" value="1"/>
</dbReference>
<dbReference type="HAMAP" id="MF_00074">
    <property type="entry name" value="16SrRNA_methyltr_G"/>
    <property type="match status" value="1"/>
</dbReference>
<dbReference type="InterPro" id="IPR003682">
    <property type="entry name" value="rRNA_ssu_MeTfrase_G"/>
</dbReference>
<dbReference type="InterPro" id="IPR029063">
    <property type="entry name" value="SAM-dependent_MTases_sf"/>
</dbReference>
<dbReference type="NCBIfam" id="TIGR00138">
    <property type="entry name" value="rsmG_gidB"/>
    <property type="match status" value="1"/>
</dbReference>
<dbReference type="PANTHER" id="PTHR31760">
    <property type="entry name" value="S-ADENOSYL-L-METHIONINE-DEPENDENT METHYLTRANSFERASES SUPERFAMILY PROTEIN"/>
    <property type="match status" value="1"/>
</dbReference>
<dbReference type="PANTHER" id="PTHR31760:SF0">
    <property type="entry name" value="S-ADENOSYL-L-METHIONINE-DEPENDENT METHYLTRANSFERASES SUPERFAMILY PROTEIN"/>
    <property type="match status" value="1"/>
</dbReference>
<dbReference type="Pfam" id="PF02527">
    <property type="entry name" value="GidB"/>
    <property type="match status" value="1"/>
</dbReference>
<dbReference type="PIRSF" id="PIRSF003078">
    <property type="entry name" value="GidB"/>
    <property type="match status" value="1"/>
</dbReference>
<dbReference type="SUPFAM" id="SSF53335">
    <property type="entry name" value="S-adenosyl-L-methionine-dependent methyltransferases"/>
    <property type="match status" value="1"/>
</dbReference>